<accession>Q1LT75</accession>
<proteinExistence type="inferred from homology"/>
<keyword id="KW-0030">Aminoacyl-tRNA synthetase</keyword>
<keyword id="KW-0067">ATP-binding</keyword>
<keyword id="KW-0963">Cytoplasm</keyword>
<keyword id="KW-0436">Ligase</keyword>
<keyword id="KW-0479">Metal-binding</keyword>
<keyword id="KW-0547">Nucleotide-binding</keyword>
<keyword id="KW-0648">Protein biosynthesis</keyword>
<keyword id="KW-1185">Reference proteome</keyword>
<keyword id="KW-0862">Zinc</keyword>
<reference key="1">
    <citation type="journal article" date="2006" name="PLoS Biol.">
        <title>Metabolic complementarity and genomics of the dual bacterial symbiosis of sharpshooters.</title>
        <authorList>
            <person name="Wu D."/>
            <person name="Daugherty S.C."/>
            <person name="Van Aken S.E."/>
            <person name="Pai G.H."/>
            <person name="Watkins K.L."/>
            <person name="Khouri H."/>
            <person name="Tallon L.J."/>
            <person name="Zaborsky J.M."/>
            <person name="Dunbar H.E."/>
            <person name="Tran P.L."/>
            <person name="Moran N.A."/>
            <person name="Eisen J.A."/>
        </authorList>
    </citation>
    <scope>NUCLEOTIDE SEQUENCE [LARGE SCALE GENOMIC DNA]</scope>
</reference>
<protein>
    <recommendedName>
        <fullName evidence="1">Methionine--tRNA ligase</fullName>
        <ecNumber evidence="1">6.1.1.10</ecNumber>
    </recommendedName>
    <alternativeName>
        <fullName evidence="1">Methionyl-tRNA synthetase</fullName>
        <shortName evidence="1">MetRS</shortName>
    </alternativeName>
</protein>
<comment type="function">
    <text evidence="1">Is required not only for elongation of protein synthesis but also for the initiation of all mRNA translation through initiator tRNA(fMet) aminoacylation.</text>
</comment>
<comment type="catalytic activity">
    <reaction evidence="1">
        <text>tRNA(Met) + L-methionine + ATP = L-methionyl-tRNA(Met) + AMP + diphosphate</text>
        <dbReference type="Rhea" id="RHEA:13481"/>
        <dbReference type="Rhea" id="RHEA-COMP:9667"/>
        <dbReference type="Rhea" id="RHEA-COMP:9698"/>
        <dbReference type="ChEBI" id="CHEBI:30616"/>
        <dbReference type="ChEBI" id="CHEBI:33019"/>
        <dbReference type="ChEBI" id="CHEBI:57844"/>
        <dbReference type="ChEBI" id="CHEBI:78442"/>
        <dbReference type="ChEBI" id="CHEBI:78530"/>
        <dbReference type="ChEBI" id="CHEBI:456215"/>
        <dbReference type="EC" id="6.1.1.10"/>
    </reaction>
</comment>
<comment type="cofactor">
    <cofactor evidence="1">
        <name>Zn(2+)</name>
        <dbReference type="ChEBI" id="CHEBI:29105"/>
    </cofactor>
    <text evidence="1">Binds 1 zinc ion per subunit.</text>
</comment>
<comment type="subunit">
    <text evidence="1">Monomer.</text>
</comment>
<comment type="subcellular location">
    <subcellularLocation>
        <location evidence="1">Cytoplasm</location>
    </subcellularLocation>
</comment>
<comment type="similarity">
    <text evidence="1">Belongs to the class-I aminoacyl-tRNA synthetase family. MetG type 1 subfamily.</text>
</comment>
<sequence>MIQVASKILVTCALPYANGSLHLGHMLEHIQADIWVRYQRIRGKQVYFICADDAHGTPIMLKAKQSGITPEAMINKINQEHQTDLAQFEISYDNYYSTHSDENRELVISIYNTLKENGLIKKRMISQLYDPIHNIFLPDRFVKGYCPRCKLPDQYGDNCEICGATYHPTDLIDPKSTLSGVTPVISKSKHLFFDLPVFSEVLRAWTRSGALQEQVANKMQEWFDMGLQQWDISRDAPYFGFEVPDTPGKYFYVWLDAPIGYIGAFKNLCNKRNDIIFDEFWHLSSKADLYHFIGKDITYFHGIFWPAILEGSKLRKPTNLFVHGYVTINGAKMSKSRGTLIKASTYLAHLDASYLRYYYATKLSSDINDIDLNFNDFVNRVNADIINKVINLAARNASFIQKYFDNKLSATIEDQYLYDYFVTASVSIGEAFNNRETSRAIREIMILADRANVYIHKKEPWVVAKNKYYQQDLHNICSMGINLFRLLMTYLQPVLPNLAIQAEAFLNTKLNWDSMVIPLTNHKISPFKTLLQRITLSQVKAMIDATH</sequence>
<name>SYM_BAUCH</name>
<dbReference type="EC" id="6.1.1.10" evidence="1"/>
<dbReference type="EMBL" id="CP000238">
    <property type="protein sequence ID" value="ABF14300.1"/>
    <property type="molecule type" value="Genomic_DNA"/>
</dbReference>
<dbReference type="SMR" id="Q1LT75"/>
<dbReference type="STRING" id="374463.BCI_0396"/>
<dbReference type="KEGG" id="bci:BCI_0396"/>
<dbReference type="HOGENOM" id="CLU_009710_7_0_6"/>
<dbReference type="OrthoDB" id="9810191at2"/>
<dbReference type="Proteomes" id="UP000002427">
    <property type="component" value="Chromosome"/>
</dbReference>
<dbReference type="GO" id="GO:0005829">
    <property type="term" value="C:cytosol"/>
    <property type="evidence" value="ECO:0007669"/>
    <property type="project" value="TreeGrafter"/>
</dbReference>
<dbReference type="GO" id="GO:0005524">
    <property type="term" value="F:ATP binding"/>
    <property type="evidence" value="ECO:0007669"/>
    <property type="project" value="UniProtKB-UniRule"/>
</dbReference>
<dbReference type="GO" id="GO:0046872">
    <property type="term" value="F:metal ion binding"/>
    <property type="evidence" value="ECO:0007669"/>
    <property type="project" value="UniProtKB-KW"/>
</dbReference>
<dbReference type="GO" id="GO:0004825">
    <property type="term" value="F:methionine-tRNA ligase activity"/>
    <property type="evidence" value="ECO:0007669"/>
    <property type="project" value="UniProtKB-UniRule"/>
</dbReference>
<dbReference type="GO" id="GO:0006431">
    <property type="term" value="P:methionyl-tRNA aminoacylation"/>
    <property type="evidence" value="ECO:0007669"/>
    <property type="project" value="UniProtKB-UniRule"/>
</dbReference>
<dbReference type="CDD" id="cd07957">
    <property type="entry name" value="Anticodon_Ia_Met"/>
    <property type="match status" value="1"/>
</dbReference>
<dbReference type="CDD" id="cd00814">
    <property type="entry name" value="MetRS_core"/>
    <property type="match status" value="1"/>
</dbReference>
<dbReference type="FunFam" id="1.10.730.10:FF:000005">
    <property type="entry name" value="Methionine--tRNA ligase"/>
    <property type="match status" value="1"/>
</dbReference>
<dbReference type="FunFam" id="2.20.28.20:FF:000001">
    <property type="entry name" value="Methionine--tRNA ligase"/>
    <property type="match status" value="1"/>
</dbReference>
<dbReference type="Gene3D" id="3.40.50.620">
    <property type="entry name" value="HUPs"/>
    <property type="match status" value="1"/>
</dbReference>
<dbReference type="Gene3D" id="1.10.730.10">
    <property type="entry name" value="Isoleucyl-tRNA Synthetase, Domain 1"/>
    <property type="match status" value="1"/>
</dbReference>
<dbReference type="Gene3D" id="2.20.28.20">
    <property type="entry name" value="Methionyl-tRNA synthetase, Zn-domain"/>
    <property type="match status" value="1"/>
</dbReference>
<dbReference type="HAMAP" id="MF_00098">
    <property type="entry name" value="Met_tRNA_synth_type1"/>
    <property type="match status" value="1"/>
</dbReference>
<dbReference type="InterPro" id="IPR001412">
    <property type="entry name" value="aa-tRNA-synth_I_CS"/>
</dbReference>
<dbReference type="InterPro" id="IPR041872">
    <property type="entry name" value="Anticodon_Met"/>
</dbReference>
<dbReference type="InterPro" id="IPR023458">
    <property type="entry name" value="Met-tRNA_ligase_1"/>
</dbReference>
<dbReference type="InterPro" id="IPR014758">
    <property type="entry name" value="Met-tRNA_synth"/>
</dbReference>
<dbReference type="InterPro" id="IPR015413">
    <property type="entry name" value="Methionyl/Leucyl_tRNA_Synth"/>
</dbReference>
<dbReference type="InterPro" id="IPR033911">
    <property type="entry name" value="MetRS_core"/>
</dbReference>
<dbReference type="InterPro" id="IPR029038">
    <property type="entry name" value="MetRS_Zn"/>
</dbReference>
<dbReference type="InterPro" id="IPR014729">
    <property type="entry name" value="Rossmann-like_a/b/a_fold"/>
</dbReference>
<dbReference type="InterPro" id="IPR009080">
    <property type="entry name" value="tRNAsynth_Ia_anticodon-bd"/>
</dbReference>
<dbReference type="NCBIfam" id="TIGR00398">
    <property type="entry name" value="metG"/>
    <property type="match status" value="1"/>
</dbReference>
<dbReference type="NCBIfam" id="NF001100">
    <property type="entry name" value="PRK00133.1"/>
    <property type="match status" value="1"/>
</dbReference>
<dbReference type="PANTHER" id="PTHR45765">
    <property type="entry name" value="METHIONINE--TRNA LIGASE"/>
    <property type="match status" value="1"/>
</dbReference>
<dbReference type="PANTHER" id="PTHR45765:SF1">
    <property type="entry name" value="METHIONINE--TRNA LIGASE, CYTOPLASMIC"/>
    <property type="match status" value="1"/>
</dbReference>
<dbReference type="Pfam" id="PF09334">
    <property type="entry name" value="tRNA-synt_1g"/>
    <property type="match status" value="1"/>
</dbReference>
<dbReference type="PRINTS" id="PR01041">
    <property type="entry name" value="TRNASYNTHMET"/>
</dbReference>
<dbReference type="SUPFAM" id="SSF47323">
    <property type="entry name" value="Anticodon-binding domain of a subclass of class I aminoacyl-tRNA synthetases"/>
    <property type="match status" value="1"/>
</dbReference>
<dbReference type="SUPFAM" id="SSF57770">
    <property type="entry name" value="Methionyl-tRNA synthetase (MetRS), Zn-domain"/>
    <property type="match status" value="1"/>
</dbReference>
<dbReference type="SUPFAM" id="SSF52374">
    <property type="entry name" value="Nucleotidylyl transferase"/>
    <property type="match status" value="1"/>
</dbReference>
<dbReference type="PROSITE" id="PS00178">
    <property type="entry name" value="AA_TRNA_LIGASE_I"/>
    <property type="match status" value="1"/>
</dbReference>
<organism>
    <name type="scientific">Baumannia cicadellinicola subsp. Homalodisca coagulata</name>
    <dbReference type="NCBI Taxonomy" id="374463"/>
    <lineage>
        <taxon>Bacteria</taxon>
        <taxon>Pseudomonadati</taxon>
        <taxon>Pseudomonadota</taxon>
        <taxon>Gammaproteobacteria</taxon>
        <taxon>Candidatus Palibaumannia</taxon>
    </lineage>
</organism>
<gene>
    <name evidence="1" type="primary">metG</name>
    <name type="ordered locus">BCI_0396</name>
</gene>
<evidence type="ECO:0000255" key="1">
    <source>
        <dbReference type="HAMAP-Rule" id="MF_00098"/>
    </source>
</evidence>
<feature type="chain" id="PRO_1000075579" description="Methionine--tRNA ligase">
    <location>
        <begin position="1"/>
        <end position="547"/>
    </location>
</feature>
<feature type="short sequence motif" description="'HIGH' region">
    <location>
        <begin position="15"/>
        <end position="25"/>
    </location>
</feature>
<feature type="short sequence motif" description="'KMSKS' region">
    <location>
        <begin position="332"/>
        <end position="336"/>
    </location>
</feature>
<feature type="binding site" evidence="1">
    <location>
        <position position="146"/>
    </location>
    <ligand>
        <name>Zn(2+)</name>
        <dbReference type="ChEBI" id="CHEBI:29105"/>
    </ligand>
</feature>
<feature type="binding site" evidence="1">
    <location>
        <position position="149"/>
    </location>
    <ligand>
        <name>Zn(2+)</name>
        <dbReference type="ChEBI" id="CHEBI:29105"/>
    </ligand>
</feature>
<feature type="binding site" evidence="1">
    <location>
        <position position="159"/>
    </location>
    <ligand>
        <name>Zn(2+)</name>
        <dbReference type="ChEBI" id="CHEBI:29105"/>
    </ligand>
</feature>
<feature type="binding site" evidence="1">
    <location>
        <position position="162"/>
    </location>
    <ligand>
        <name>Zn(2+)</name>
        <dbReference type="ChEBI" id="CHEBI:29105"/>
    </ligand>
</feature>
<feature type="binding site" evidence="1">
    <location>
        <position position="335"/>
    </location>
    <ligand>
        <name>ATP</name>
        <dbReference type="ChEBI" id="CHEBI:30616"/>
    </ligand>
</feature>